<name>LEPA_LISW6</name>
<evidence type="ECO:0000255" key="1">
    <source>
        <dbReference type="HAMAP-Rule" id="MF_00071"/>
    </source>
</evidence>
<protein>
    <recommendedName>
        <fullName evidence="1">Elongation factor 4</fullName>
        <shortName evidence="1">EF-4</shortName>
        <ecNumber evidence="1">3.6.5.n1</ecNumber>
    </recommendedName>
    <alternativeName>
        <fullName evidence="1">Ribosomal back-translocase LepA</fullName>
    </alternativeName>
</protein>
<reference key="1">
    <citation type="journal article" date="2006" name="J. Bacteriol.">
        <title>Whole-genome sequence of Listeria welshimeri reveals common steps in genome reduction with Listeria innocua as compared to Listeria monocytogenes.</title>
        <authorList>
            <person name="Hain T."/>
            <person name="Steinweg C."/>
            <person name="Kuenne C.T."/>
            <person name="Billion A."/>
            <person name="Ghai R."/>
            <person name="Chatterjee S.S."/>
            <person name="Domann E."/>
            <person name="Kaerst U."/>
            <person name="Goesmann A."/>
            <person name="Bekel T."/>
            <person name="Bartels D."/>
            <person name="Kaiser O."/>
            <person name="Meyer F."/>
            <person name="Puehler A."/>
            <person name="Weisshaar B."/>
            <person name="Wehland J."/>
            <person name="Liang C."/>
            <person name="Dandekar T."/>
            <person name="Lampidis R."/>
            <person name="Kreft J."/>
            <person name="Goebel W."/>
            <person name="Chakraborty T."/>
        </authorList>
    </citation>
    <scope>NUCLEOTIDE SEQUENCE [LARGE SCALE GENOMIC DNA]</scope>
    <source>
        <strain>ATCC 35897 / DSM 20650 / CCUG 15529 / CIP 8149 / NCTC 11857 / SLCC 5334 / V8</strain>
    </source>
</reference>
<proteinExistence type="inferred from homology"/>
<feature type="chain" id="PRO_1000032017" description="Elongation factor 4">
    <location>
        <begin position="1"/>
        <end position="608"/>
    </location>
</feature>
<feature type="domain" description="tr-type G">
    <location>
        <begin position="11"/>
        <end position="193"/>
    </location>
</feature>
<feature type="binding site" evidence="1">
    <location>
        <begin position="23"/>
        <end position="28"/>
    </location>
    <ligand>
        <name>GTP</name>
        <dbReference type="ChEBI" id="CHEBI:37565"/>
    </ligand>
</feature>
<feature type="binding site" evidence="1">
    <location>
        <begin position="140"/>
        <end position="143"/>
    </location>
    <ligand>
        <name>GTP</name>
        <dbReference type="ChEBI" id="CHEBI:37565"/>
    </ligand>
</feature>
<keyword id="KW-1003">Cell membrane</keyword>
<keyword id="KW-0342">GTP-binding</keyword>
<keyword id="KW-0378">Hydrolase</keyword>
<keyword id="KW-0472">Membrane</keyword>
<keyword id="KW-0547">Nucleotide-binding</keyword>
<keyword id="KW-0648">Protein biosynthesis</keyword>
<sequence>MNKEEMNARQKKIRNFSIIAHIDHGKSTLADRILEQTGALTHREMKNQLLDSMDLERERGITIKLNAVQLKYKAKDGETYIFHLIDTPGHVDFTYEVSRSLAACEGAILVVDAAQGIEAQTLANVYLALDNDLEILPVINKIDLPAADPERVRAEIEDVIGLDASDAVLASAKSGIGIEDILEQIVEKVPEPSGDVNKPLKALIFDSVFDAYRGVIANIRIMDGVVKAGDRIKMMSNGKEFEVTEVGVFSPKATPRDELLVGDVGYLTAAIKNVGDTRVGDTITLANNPAEEALDGYRKLNPMVYCGLYPIDSSKYNDLRDALEKLELNDSALQFEAETSQALGFGFRCGFLGLLHMEIIQERIEREFNIDLITTAPSVIYHVNLTDGSNIVVDNPADMPEPGVIESVEEPYVKATVMVPNDYVGAVMELAQNKRGNFITMEYLDDIRVSIVYEIPLSEIVYDFFDQLKSSTKGYASFDYELIGYKASKLVKMDILLNAEKVDALSFIVHRDFAYERGKIIVEKLKELIPRQQFEVPIQAAIATKIVSRSTIKALRKNVLAKCYGGDVSRKRKLLEKQKEGKKRMKQIGSVEVPQEAFMAILKMDESK</sequence>
<dbReference type="EC" id="3.6.5.n1" evidence="1"/>
<dbReference type="EMBL" id="AM263198">
    <property type="protein sequence ID" value="CAK20910.1"/>
    <property type="molecule type" value="Genomic_DNA"/>
</dbReference>
<dbReference type="RefSeq" id="WP_011702283.1">
    <property type="nucleotide sequence ID" value="NC_008555.1"/>
</dbReference>
<dbReference type="SMR" id="A0AIS8"/>
<dbReference type="STRING" id="386043.lwe1492"/>
<dbReference type="GeneID" id="61189368"/>
<dbReference type="KEGG" id="lwe:lwe1492"/>
<dbReference type="eggNOG" id="COG0481">
    <property type="taxonomic scope" value="Bacteria"/>
</dbReference>
<dbReference type="HOGENOM" id="CLU_009995_3_3_9"/>
<dbReference type="OrthoDB" id="2443343at2"/>
<dbReference type="Proteomes" id="UP000000779">
    <property type="component" value="Chromosome"/>
</dbReference>
<dbReference type="GO" id="GO:0005886">
    <property type="term" value="C:plasma membrane"/>
    <property type="evidence" value="ECO:0007669"/>
    <property type="project" value="UniProtKB-SubCell"/>
</dbReference>
<dbReference type="GO" id="GO:0005525">
    <property type="term" value="F:GTP binding"/>
    <property type="evidence" value="ECO:0007669"/>
    <property type="project" value="UniProtKB-UniRule"/>
</dbReference>
<dbReference type="GO" id="GO:0003924">
    <property type="term" value="F:GTPase activity"/>
    <property type="evidence" value="ECO:0007669"/>
    <property type="project" value="UniProtKB-UniRule"/>
</dbReference>
<dbReference type="GO" id="GO:0043022">
    <property type="term" value="F:ribosome binding"/>
    <property type="evidence" value="ECO:0007669"/>
    <property type="project" value="UniProtKB-UniRule"/>
</dbReference>
<dbReference type="GO" id="GO:0003746">
    <property type="term" value="F:translation elongation factor activity"/>
    <property type="evidence" value="ECO:0007669"/>
    <property type="project" value="UniProtKB-UniRule"/>
</dbReference>
<dbReference type="GO" id="GO:0045727">
    <property type="term" value="P:positive regulation of translation"/>
    <property type="evidence" value="ECO:0007669"/>
    <property type="project" value="UniProtKB-UniRule"/>
</dbReference>
<dbReference type="CDD" id="cd03699">
    <property type="entry name" value="EF4_II"/>
    <property type="match status" value="1"/>
</dbReference>
<dbReference type="CDD" id="cd16260">
    <property type="entry name" value="EF4_III"/>
    <property type="match status" value="1"/>
</dbReference>
<dbReference type="CDD" id="cd01890">
    <property type="entry name" value="LepA"/>
    <property type="match status" value="1"/>
</dbReference>
<dbReference type="CDD" id="cd03709">
    <property type="entry name" value="lepA_C"/>
    <property type="match status" value="1"/>
</dbReference>
<dbReference type="FunFam" id="3.40.50.300:FF:000078">
    <property type="entry name" value="Elongation factor 4"/>
    <property type="match status" value="1"/>
</dbReference>
<dbReference type="FunFam" id="2.40.30.10:FF:000015">
    <property type="entry name" value="Translation factor GUF1, mitochondrial"/>
    <property type="match status" value="1"/>
</dbReference>
<dbReference type="FunFam" id="3.30.70.240:FF:000007">
    <property type="entry name" value="Translation factor GUF1, mitochondrial"/>
    <property type="match status" value="1"/>
</dbReference>
<dbReference type="FunFam" id="3.30.70.2570:FF:000001">
    <property type="entry name" value="Translation factor GUF1, mitochondrial"/>
    <property type="match status" value="1"/>
</dbReference>
<dbReference type="FunFam" id="3.30.70.870:FF:000004">
    <property type="entry name" value="Translation factor GUF1, mitochondrial"/>
    <property type="match status" value="1"/>
</dbReference>
<dbReference type="Gene3D" id="3.30.70.240">
    <property type="match status" value="1"/>
</dbReference>
<dbReference type="Gene3D" id="3.30.70.2570">
    <property type="entry name" value="Elongation factor 4, C-terminal domain"/>
    <property type="match status" value="1"/>
</dbReference>
<dbReference type="Gene3D" id="3.30.70.870">
    <property type="entry name" value="Elongation Factor G (Translational Gtpase), domain 3"/>
    <property type="match status" value="1"/>
</dbReference>
<dbReference type="Gene3D" id="3.40.50.300">
    <property type="entry name" value="P-loop containing nucleotide triphosphate hydrolases"/>
    <property type="match status" value="1"/>
</dbReference>
<dbReference type="Gene3D" id="2.40.30.10">
    <property type="entry name" value="Translation factors"/>
    <property type="match status" value="1"/>
</dbReference>
<dbReference type="HAMAP" id="MF_00071">
    <property type="entry name" value="LepA"/>
    <property type="match status" value="1"/>
</dbReference>
<dbReference type="InterPro" id="IPR006297">
    <property type="entry name" value="EF-4"/>
</dbReference>
<dbReference type="InterPro" id="IPR035647">
    <property type="entry name" value="EFG_III/V"/>
</dbReference>
<dbReference type="InterPro" id="IPR000640">
    <property type="entry name" value="EFG_V-like"/>
</dbReference>
<dbReference type="InterPro" id="IPR004161">
    <property type="entry name" value="EFTu-like_2"/>
</dbReference>
<dbReference type="InterPro" id="IPR031157">
    <property type="entry name" value="G_TR_CS"/>
</dbReference>
<dbReference type="InterPro" id="IPR038363">
    <property type="entry name" value="LepA_C_sf"/>
</dbReference>
<dbReference type="InterPro" id="IPR013842">
    <property type="entry name" value="LepA_CTD"/>
</dbReference>
<dbReference type="InterPro" id="IPR035654">
    <property type="entry name" value="LepA_IV"/>
</dbReference>
<dbReference type="InterPro" id="IPR027417">
    <property type="entry name" value="P-loop_NTPase"/>
</dbReference>
<dbReference type="InterPro" id="IPR005225">
    <property type="entry name" value="Small_GTP-bd"/>
</dbReference>
<dbReference type="InterPro" id="IPR000795">
    <property type="entry name" value="T_Tr_GTP-bd_dom"/>
</dbReference>
<dbReference type="NCBIfam" id="TIGR01393">
    <property type="entry name" value="lepA"/>
    <property type="match status" value="1"/>
</dbReference>
<dbReference type="NCBIfam" id="TIGR00231">
    <property type="entry name" value="small_GTP"/>
    <property type="match status" value="1"/>
</dbReference>
<dbReference type="PANTHER" id="PTHR43512:SF4">
    <property type="entry name" value="TRANSLATION FACTOR GUF1 HOMOLOG, CHLOROPLASTIC"/>
    <property type="match status" value="1"/>
</dbReference>
<dbReference type="PANTHER" id="PTHR43512">
    <property type="entry name" value="TRANSLATION FACTOR GUF1-RELATED"/>
    <property type="match status" value="1"/>
</dbReference>
<dbReference type="Pfam" id="PF00679">
    <property type="entry name" value="EFG_C"/>
    <property type="match status" value="1"/>
</dbReference>
<dbReference type="Pfam" id="PF00009">
    <property type="entry name" value="GTP_EFTU"/>
    <property type="match status" value="1"/>
</dbReference>
<dbReference type="Pfam" id="PF03144">
    <property type="entry name" value="GTP_EFTU_D2"/>
    <property type="match status" value="1"/>
</dbReference>
<dbReference type="Pfam" id="PF06421">
    <property type="entry name" value="LepA_C"/>
    <property type="match status" value="1"/>
</dbReference>
<dbReference type="PRINTS" id="PR00315">
    <property type="entry name" value="ELONGATNFCT"/>
</dbReference>
<dbReference type="SMART" id="SM00838">
    <property type="entry name" value="EFG_C"/>
    <property type="match status" value="1"/>
</dbReference>
<dbReference type="SUPFAM" id="SSF54980">
    <property type="entry name" value="EF-G C-terminal domain-like"/>
    <property type="match status" value="2"/>
</dbReference>
<dbReference type="SUPFAM" id="SSF52540">
    <property type="entry name" value="P-loop containing nucleoside triphosphate hydrolases"/>
    <property type="match status" value="1"/>
</dbReference>
<dbReference type="PROSITE" id="PS00301">
    <property type="entry name" value="G_TR_1"/>
    <property type="match status" value="1"/>
</dbReference>
<dbReference type="PROSITE" id="PS51722">
    <property type="entry name" value="G_TR_2"/>
    <property type="match status" value="1"/>
</dbReference>
<gene>
    <name evidence="1" type="primary">lepA</name>
    <name type="ordered locus">lwe1492</name>
</gene>
<accession>A0AIS8</accession>
<comment type="function">
    <text evidence="1">Required for accurate and efficient protein synthesis under certain stress conditions. May act as a fidelity factor of the translation reaction, by catalyzing a one-codon backward translocation of tRNAs on improperly translocated ribosomes. Back-translocation proceeds from a post-translocation (POST) complex to a pre-translocation (PRE) complex, thus giving elongation factor G a second chance to translocate the tRNAs correctly. Binds to ribosomes in a GTP-dependent manner.</text>
</comment>
<comment type="catalytic activity">
    <reaction evidence="1">
        <text>GTP + H2O = GDP + phosphate + H(+)</text>
        <dbReference type="Rhea" id="RHEA:19669"/>
        <dbReference type="ChEBI" id="CHEBI:15377"/>
        <dbReference type="ChEBI" id="CHEBI:15378"/>
        <dbReference type="ChEBI" id="CHEBI:37565"/>
        <dbReference type="ChEBI" id="CHEBI:43474"/>
        <dbReference type="ChEBI" id="CHEBI:58189"/>
        <dbReference type="EC" id="3.6.5.n1"/>
    </reaction>
</comment>
<comment type="subcellular location">
    <subcellularLocation>
        <location evidence="1">Cell membrane</location>
        <topology evidence="1">Peripheral membrane protein</topology>
        <orientation evidence="1">Cytoplasmic side</orientation>
    </subcellularLocation>
</comment>
<comment type="similarity">
    <text evidence="1">Belongs to the TRAFAC class translation factor GTPase superfamily. Classic translation factor GTPase family. LepA subfamily.</text>
</comment>
<organism>
    <name type="scientific">Listeria welshimeri serovar 6b (strain ATCC 35897 / DSM 20650 / CCUG 15529 / CIP 8149 / NCTC 11857 / SLCC 5334 / V8)</name>
    <dbReference type="NCBI Taxonomy" id="386043"/>
    <lineage>
        <taxon>Bacteria</taxon>
        <taxon>Bacillati</taxon>
        <taxon>Bacillota</taxon>
        <taxon>Bacilli</taxon>
        <taxon>Bacillales</taxon>
        <taxon>Listeriaceae</taxon>
        <taxon>Listeria</taxon>
    </lineage>
</organism>